<proteinExistence type="evidence at protein level"/>
<evidence type="ECO:0000269" key="1">
    <source>
    </source>
</evidence>
<evidence type="ECO:0000269" key="2">
    <source>
    </source>
</evidence>
<evidence type="ECO:0000269" key="3">
    <source>
    </source>
</evidence>
<evidence type="ECO:0000269" key="4">
    <source ref="2"/>
</evidence>
<evidence type="ECO:0000269" key="5">
    <source ref="3"/>
</evidence>
<evidence type="ECO:0000305" key="6"/>
<evidence type="ECO:0000312" key="7">
    <source>
        <dbReference type="EMBL" id="CAD20557.1"/>
    </source>
</evidence>
<evidence type="ECO:0007829" key="8">
    <source>
        <dbReference type="PDB" id="1H0H"/>
    </source>
</evidence>
<gene>
    <name evidence="7" type="primary">fdhB</name>
</gene>
<feature type="initiator methionine" description="Removed">
    <location>
        <position position="1"/>
    </location>
</feature>
<feature type="chain" id="PRO_0000159221" description="Formate dehydrogenase subunit beta">
    <location>
        <begin position="2"/>
        <end position="215"/>
    </location>
</feature>
<feature type="domain" description="4Fe-4S ferredoxin-type 1">
    <location>
        <begin position="3"/>
        <end position="32"/>
    </location>
</feature>
<feature type="domain" description="4Fe-4S ferredoxin-type 2">
    <location>
        <begin position="129"/>
        <end position="168"/>
    </location>
</feature>
<feature type="binding site" evidence="2">
    <location>
        <position position="12"/>
    </location>
    <ligand>
        <name>[4Fe-4S] cluster</name>
        <dbReference type="ChEBI" id="CHEBI:49883"/>
        <label>1</label>
    </ligand>
</feature>
<feature type="binding site" evidence="2">
    <location>
        <position position="15"/>
    </location>
    <ligand>
        <name>[4Fe-4S] cluster</name>
        <dbReference type="ChEBI" id="CHEBI:49883"/>
        <label>1</label>
    </ligand>
</feature>
<feature type="binding site" evidence="2">
    <location>
        <position position="18"/>
    </location>
    <ligand>
        <name>[4Fe-4S] cluster</name>
        <dbReference type="ChEBI" id="CHEBI:49883"/>
        <label>1</label>
    </ligand>
</feature>
<feature type="binding site" evidence="2">
    <location>
        <position position="22"/>
    </location>
    <ligand>
        <name>[4Fe-4S] cluster</name>
        <dbReference type="ChEBI" id="CHEBI:49883"/>
        <label>2</label>
    </ligand>
</feature>
<feature type="binding site" evidence="2">
    <location>
        <position position="73"/>
    </location>
    <ligand>
        <name>[4Fe-4S] cluster</name>
        <dbReference type="ChEBI" id="CHEBI:49883"/>
        <label>3</label>
    </ligand>
</feature>
<feature type="binding site" evidence="2">
    <location>
        <position position="76"/>
    </location>
    <ligand>
        <name>[4Fe-4S] cluster</name>
        <dbReference type="ChEBI" id="CHEBI:49883"/>
        <label>3</label>
    </ligand>
</feature>
<feature type="binding site" evidence="2">
    <location>
        <position position="81"/>
    </location>
    <ligand>
        <name>[4Fe-4S] cluster</name>
        <dbReference type="ChEBI" id="CHEBI:49883"/>
        <label>3</label>
    </ligand>
</feature>
<feature type="binding site" evidence="2">
    <location>
        <position position="121"/>
    </location>
    <ligand>
        <name>[4Fe-4S] cluster</name>
        <dbReference type="ChEBI" id="CHEBI:49883"/>
        <label>3</label>
    </ligand>
</feature>
<feature type="binding site" evidence="2">
    <location>
        <position position="138"/>
    </location>
    <ligand>
        <name>[4Fe-4S] cluster</name>
        <dbReference type="ChEBI" id="CHEBI:49883"/>
        <label>2</label>
    </ligand>
</feature>
<feature type="binding site" evidence="2">
    <location>
        <position position="141"/>
    </location>
    <ligand>
        <name>[4Fe-4S] cluster</name>
        <dbReference type="ChEBI" id="CHEBI:49883"/>
        <label>2</label>
    </ligand>
</feature>
<feature type="binding site" evidence="2">
    <location>
        <position position="153"/>
    </location>
    <ligand>
        <name>[4Fe-4S] cluster</name>
        <dbReference type="ChEBI" id="CHEBI:49883"/>
        <label>2</label>
    </ligand>
</feature>
<feature type="binding site" evidence="2">
    <location>
        <position position="157"/>
    </location>
    <ligand>
        <name>[4Fe-4S] cluster</name>
        <dbReference type="ChEBI" id="CHEBI:49883"/>
        <label>1</label>
    </ligand>
</feature>
<feature type="strand" evidence="8">
    <location>
        <begin position="3"/>
        <end position="8"/>
    </location>
</feature>
<feature type="helix" evidence="8">
    <location>
        <begin position="9"/>
        <end position="11"/>
    </location>
</feature>
<feature type="helix" evidence="8">
    <location>
        <begin position="17"/>
        <end position="26"/>
    </location>
</feature>
<feature type="strand" evidence="8">
    <location>
        <begin position="42"/>
        <end position="44"/>
    </location>
</feature>
<feature type="strand" evidence="8">
    <location>
        <begin position="52"/>
        <end position="60"/>
    </location>
</feature>
<feature type="strand" evidence="8">
    <location>
        <begin position="63"/>
        <end position="71"/>
    </location>
</feature>
<feature type="helix" evidence="8">
    <location>
        <begin position="80"/>
        <end position="85"/>
    </location>
</feature>
<feature type="turn" evidence="8">
    <location>
        <begin position="86"/>
        <end position="88"/>
    </location>
</feature>
<feature type="strand" evidence="8">
    <location>
        <begin position="92"/>
        <end position="95"/>
    </location>
</feature>
<feature type="turn" evidence="8">
    <location>
        <begin position="97"/>
        <end position="99"/>
    </location>
</feature>
<feature type="strand" evidence="8">
    <location>
        <begin position="102"/>
        <end position="104"/>
    </location>
</feature>
<feature type="helix" evidence="8">
    <location>
        <begin position="106"/>
        <end position="110"/>
    </location>
</feature>
<feature type="helix" evidence="8">
    <location>
        <begin position="114"/>
        <end position="120"/>
    </location>
</feature>
<feature type="helix" evidence="8">
    <location>
        <begin position="142"/>
        <end position="145"/>
    </location>
</feature>
<feature type="turn" evidence="8">
    <location>
        <begin position="146"/>
        <end position="148"/>
    </location>
</feature>
<feature type="helix" evidence="8">
    <location>
        <begin position="152"/>
        <end position="156"/>
    </location>
</feature>
<feature type="strand" evidence="8">
    <location>
        <begin position="158"/>
        <end position="160"/>
    </location>
</feature>
<feature type="strand" evidence="8">
    <location>
        <begin position="162"/>
        <end position="166"/>
    </location>
</feature>
<feature type="helix" evidence="8">
    <location>
        <begin position="167"/>
        <end position="181"/>
    </location>
</feature>
<feature type="turn" evidence="8">
    <location>
        <begin position="182"/>
        <end position="184"/>
    </location>
</feature>
<feature type="strand" evidence="8">
    <location>
        <begin position="189"/>
        <end position="192"/>
    </location>
</feature>
<feature type="turn" evidence="8">
    <location>
        <begin position="193"/>
        <end position="195"/>
    </location>
</feature>
<feature type="strand" evidence="8">
    <location>
        <begin position="197"/>
        <end position="204"/>
    </location>
</feature>
<feature type="helix" evidence="8">
    <location>
        <begin position="206"/>
        <end position="208"/>
    </location>
</feature>
<protein>
    <recommendedName>
        <fullName>Formate dehydrogenase subunit beta</fullName>
        <shortName>FDH subunit beta</shortName>
    </recommendedName>
    <alternativeName>
        <fullName>Formate dehydrogenase small subunit</fullName>
    </alternativeName>
</protein>
<name>FDHB_MEGG1</name>
<organism>
    <name type="scientific">Megalodesulfovibrio gigas (strain ATCC 19364 / DSM 1382 / NCIMB 9332 / VKM B-1759)</name>
    <name type="common">Desulfovibrio gigas</name>
    <dbReference type="NCBI Taxonomy" id="1121448"/>
    <lineage>
        <taxon>Bacteria</taxon>
        <taxon>Pseudomonadati</taxon>
        <taxon>Thermodesulfobacteriota</taxon>
        <taxon>Desulfovibrionia</taxon>
        <taxon>Desulfovibrionales</taxon>
        <taxon>Desulfovibrionaceae</taxon>
        <taxon>Megalodesulfovibrio</taxon>
    </lineage>
</organism>
<reference evidence="6" key="1">
    <citation type="journal article" date="2002" name="Structure">
        <title>Gene sequence and the 1.8 A crystal structure of the tungsten-containing formate dehydrogenase from Desulfovibrio gigas.</title>
        <authorList>
            <person name="Raaijmakers H."/>
            <person name="Macieira S.I.M.G."/>
            <person name="Dias J.M."/>
            <person name="Teixeira S."/>
            <person name="Bursakov S."/>
            <person name="Huber R."/>
            <person name="Moura J.J.G."/>
            <person name="Moura I."/>
            <person name="Romao M.J."/>
        </authorList>
    </citation>
    <scope>NUCLEOTIDE SEQUENCE [GENOMIC DNA] OF 1-156</scope>
    <scope>PROTEIN SEQUENCE OF 157-215</scope>
    <scope>SUBUNIT</scope>
    <scope>X-RAY CRYSTALLOGRAPHY (1.8 ANGSTROMS) IN COMPLEX WITH FDHA</scope>
    <source>
        <strain>ATCC 19364 / DSM 1382 / NCIMB 9332 / VKM B-1759</strain>
    </source>
</reference>
<reference evidence="6" key="2">
    <citation type="submission" date="2002-01" db="UniProtKB">
        <authorList>
            <person name="Raaijmakers H."/>
            <person name="Macieira S.I.M.G."/>
            <person name="Dias J.M."/>
            <person name="Teixeira S."/>
            <person name="Bursakov S."/>
            <person name="Huber R."/>
            <person name="Moura J.J.G."/>
            <person name="Moura I."/>
            <person name="Romao M.J."/>
        </authorList>
    </citation>
    <scope>PROTEIN SEQUENCE OF 157-215</scope>
    <scope>METAL-BINDING</scope>
    <scope>SUBUNIT</scope>
    <scope>SUBCELLULAR LOCATION</scope>
    <source>
        <strain>ATCC 19364 / DSM 1382 / NCIMB 9332 / VKM B-1759</strain>
    </source>
</reference>
<reference evidence="6" key="3">
    <citation type="journal article" date="1986" name="Can. J. Microbiol.">
        <title>Properties of formate dehydrogenase from Desulfivibrio gigas.</title>
        <authorList>
            <person name="Riederer-Henderson M.A."/>
            <person name="Peck H.D. Jr."/>
        </authorList>
    </citation>
    <scope>FUNCTION</scope>
</reference>
<reference evidence="6" key="4">
    <citation type="journal article" date="1999" name="Biochemistry">
        <title>Purification and characterization of a tungsten-containing formate dehydrogenase from Desulfovibrio gigas.</title>
        <authorList>
            <person name="Almendra M.J."/>
            <person name="Brondino C.D."/>
            <person name="Gavel O."/>
            <person name="Pereira A.S."/>
            <person name="Tavares P."/>
            <person name="Bursakov S."/>
            <person name="Duarte R."/>
            <person name="Caldeira J."/>
            <person name="Moura J.J.G."/>
            <person name="Moura I."/>
        </authorList>
    </citation>
    <scope>SUBUNIT</scope>
    <scope>FUNCTION</scope>
    <source>
        <strain>ATCC 19364 / DSM 1382 / NCIMB 9332 / VKM B-1759</strain>
    </source>
</reference>
<reference evidence="6" key="5">
    <citation type="journal article" date="2001" name="J. Biol. Inorg. Chem.">
        <title>Tungsten-containing formate dehydrogenase from Desulfovibrio gigas: metal identification and preliminary structural data by multi-wavelength crystallography.</title>
        <authorList>
            <person name="Raaijmakers H."/>
            <person name="Teixeira S."/>
            <person name="Dias J.M."/>
            <person name="Almendra M.J."/>
            <person name="Brondino C.D."/>
            <person name="Moura I."/>
            <person name="Moura J.J.G."/>
            <person name="Romao M.J."/>
        </authorList>
    </citation>
    <scope>METAL-BINDING</scope>
    <scope>SUBUNIT</scope>
</reference>
<keyword id="KW-0002">3D-structure</keyword>
<keyword id="KW-0004">4Fe-4S</keyword>
<keyword id="KW-0903">Direct protein sequencing</keyword>
<keyword id="KW-0249">Electron transport</keyword>
<keyword id="KW-0408">Iron</keyword>
<keyword id="KW-0411">Iron-sulfur</keyword>
<keyword id="KW-0479">Metal-binding</keyword>
<keyword id="KW-0574">Periplasm</keyword>
<keyword id="KW-0677">Repeat</keyword>
<keyword id="KW-0813">Transport</keyword>
<sequence>MSKGFFVDTTRCTACRGCQVACKQWHGNPATPTENTGFHQNPPDFNFHTYKLVRMHEQEIDGRIDWLFFPDQCRHCIAPPCKATADMEDESAIIHDDATGCVLFTPKTKDLEDYESVISACPYDVPRKVAESNQMAKCDMCIDRITNGLRPACVTSCPTGAMNFGDLSEMEAMASARLAEIKAAYSDAKLCDPDDVRVIFLTAHNPKLYHEYAVA</sequence>
<dbReference type="EMBL" id="AJ427412">
    <property type="protein sequence ID" value="CAD20557.1"/>
    <property type="molecule type" value="Genomic_DNA"/>
</dbReference>
<dbReference type="PDB" id="1H0H">
    <property type="method" value="X-ray"/>
    <property type="resolution" value="1.80 A"/>
    <property type="chains" value="B/L=2-215"/>
</dbReference>
<dbReference type="PDBsum" id="1H0H"/>
<dbReference type="SMR" id="Q8GC87"/>
<dbReference type="STRING" id="1121448.DGI_1364"/>
<dbReference type="EvolutionaryTrace" id="Q8GC87"/>
<dbReference type="GO" id="GO:0042597">
    <property type="term" value="C:periplasmic space"/>
    <property type="evidence" value="ECO:0007669"/>
    <property type="project" value="UniProtKB-SubCell"/>
</dbReference>
<dbReference type="GO" id="GO:0051539">
    <property type="term" value="F:4 iron, 4 sulfur cluster binding"/>
    <property type="evidence" value="ECO:0007669"/>
    <property type="project" value="UniProtKB-KW"/>
</dbReference>
<dbReference type="GO" id="GO:0046872">
    <property type="term" value="F:metal ion binding"/>
    <property type="evidence" value="ECO:0007669"/>
    <property type="project" value="UniProtKB-KW"/>
</dbReference>
<dbReference type="CDD" id="cd10559">
    <property type="entry name" value="W-FDH"/>
    <property type="match status" value="1"/>
</dbReference>
<dbReference type="Gene3D" id="3.30.70.20">
    <property type="match status" value="2"/>
</dbReference>
<dbReference type="InterPro" id="IPR017896">
    <property type="entry name" value="4Fe4S_Fe-S-bd"/>
</dbReference>
<dbReference type="InterPro" id="IPR051555">
    <property type="entry name" value="FDH_Electron_Transfer_Unit"/>
</dbReference>
<dbReference type="PANTHER" id="PTHR43545">
    <property type="entry name" value="FORMATE DEHYDROGENASE, NITRATE-INDUCIBLE, IRON-SULFUR SUBUNIT"/>
    <property type="match status" value="1"/>
</dbReference>
<dbReference type="PANTHER" id="PTHR43545:SF4">
    <property type="entry name" value="IRON-SULFUR PROTEIN"/>
    <property type="match status" value="1"/>
</dbReference>
<dbReference type="Pfam" id="PF13247">
    <property type="entry name" value="Fer4_11"/>
    <property type="match status" value="1"/>
</dbReference>
<dbReference type="SUPFAM" id="SSF54862">
    <property type="entry name" value="4Fe-4S ferredoxins"/>
    <property type="match status" value="1"/>
</dbReference>
<accession>Q8GC87</accession>
<accession>P83237</accession>
<comment type="function">
    <text evidence="1 5">Beta chain of the formate dehydrogenase (FDH) catalyzes the reversible two-electron oxidation of formate to carbon dioxide. FDH loses activity in the presence of air, but this activity can be restored. This chain is an electron transfer unit.</text>
</comment>
<comment type="cofactor">
    <cofactor evidence="2">
        <name>[4Fe-4S] cluster</name>
        <dbReference type="ChEBI" id="CHEBI:49883"/>
    </cofactor>
    <text evidence="2">Binds 3 [4Fe-4S] clusters.</text>
</comment>
<comment type="subunit">
    <text evidence="1 2 3 4">Heterodimer of alpha (FdhA) and beta (FdhB) subunits.</text>
</comment>
<comment type="subcellular location">
    <subcellularLocation>
        <location evidence="4">Periplasm</location>
    </subcellularLocation>
</comment>